<name>EX7S_SYMTH</name>
<dbReference type="EC" id="3.1.11.6" evidence="1"/>
<dbReference type="EMBL" id="AP006840">
    <property type="protein sequence ID" value="BAD40830.1"/>
    <property type="molecule type" value="Genomic_DNA"/>
</dbReference>
<dbReference type="RefSeq" id="WP_011195973.1">
    <property type="nucleotide sequence ID" value="NC_006177.1"/>
</dbReference>
<dbReference type="SMR" id="Q67NB3"/>
<dbReference type="STRING" id="292459.STH1845"/>
<dbReference type="KEGG" id="sth:STH1845"/>
<dbReference type="eggNOG" id="COG1722">
    <property type="taxonomic scope" value="Bacteria"/>
</dbReference>
<dbReference type="HOGENOM" id="CLU_145918_3_1_9"/>
<dbReference type="OrthoDB" id="9798666at2"/>
<dbReference type="Proteomes" id="UP000000417">
    <property type="component" value="Chromosome"/>
</dbReference>
<dbReference type="GO" id="GO:0005829">
    <property type="term" value="C:cytosol"/>
    <property type="evidence" value="ECO:0007669"/>
    <property type="project" value="TreeGrafter"/>
</dbReference>
<dbReference type="GO" id="GO:0009318">
    <property type="term" value="C:exodeoxyribonuclease VII complex"/>
    <property type="evidence" value="ECO:0007669"/>
    <property type="project" value="InterPro"/>
</dbReference>
<dbReference type="GO" id="GO:0008855">
    <property type="term" value="F:exodeoxyribonuclease VII activity"/>
    <property type="evidence" value="ECO:0007669"/>
    <property type="project" value="UniProtKB-UniRule"/>
</dbReference>
<dbReference type="GO" id="GO:0006308">
    <property type="term" value="P:DNA catabolic process"/>
    <property type="evidence" value="ECO:0007669"/>
    <property type="project" value="UniProtKB-UniRule"/>
</dbReference>
<dbReference type="Gene3D" id="1.10.287.1040">
    <property type="entry name" value="Exonuclease VII, small subunit"/>
    <property type="match status" value="1"/>
</dbReference>
<dbReference type="HAMAP" id="MF_00337">
    <property type="entry name" value="Exonuc_7_S"/>
    <property type="match status" value="1"/>
</dbReference>
<dbReference type="InterPro" id="IPR003761">
    <property type="entry name" value="Exonuc_VII_S"/>
</dbReference>
<dbReference type="InterPro" id="IPR037004">
    <property type="entry name" value="Exonuc_VII_ssu_sf"/>
</dbReference>
<dbReference type="NCBIfam" id="NF002139">
    <property type="entry name" value="PRK00977.1-3"/>
    <property type="match status" value="1"/>
</dbReference>
<dbReference type="NCBIfam" id="NF002140">
    <property type="entry name" value="PRK00977.1-4"/>
    <property type="match status" value="1"/>
</dbReference>
<dbReference type="NCBIfam" id="TIGR01280">
    <property type="entry name" value="xseB"/>
    <property type="match status" value="1"/>
</dbReference>
<dbReference type="PANTHER" id="PTHR34137">
    <property type="entry name" value="EXODEOXYRIBONUCLEASE 7 SMALL SUBUNIT"/>
    <property type="match status" value="1"/>
</dbReference>
<dbReference type="PANTHER" id="PTHR34137:SF1">
    <property type="entry name" value="EXODEOXYRIBONUCLEASE 7 SMALL SUBUNIT"/>
    <property type="match status" value="1"/>
</dbReference>
<dbReference type="Pfam" id="PF02609">
    <property type="entry name" value="Exonuc_VII_S"/>
    <property type="match status" value="1"/>
</dbReference>
<dbReference type="PIRSF" id="PIRSF006488">
    <property type="entry name" value="Exonuc_VII_S"/>
    <property type="match status" value="1"/>
</dbReference>
<dbReference type="SUPFAM" id="SSF116842">
    <property type="entry name" value="XseB-like"/>
    <property type="match status" value="1"/>
</dbReference>
<accession>Q67NB3</accession>
<feature type="chain" id="PRO_0000207024" description="Exodeoxyribonuclease 7 small subunit">
    <location>
        <begin position="1"/>
        <end position="74"/>
    </location>
</feature>
<evidence type="ECO:0000255" key="1">
    <source>
        <dbReference type="HAMAP-Rule" id="MF_00337"/>
    </source>
</evidence>
<gene>
    <name evidence="1" type="primary">xseB</name>
    <name type="ordered locus">STH1845</name>
</gene>
<keyword id="KW-0963">Cytoplasm</keyword>
<keyword id="KW-0269">Exonuclease</keyword>
<keyword id="KW-0378">Hydrolase</keyword>
<keyword id="KW-0540">Nuclease</keyword>
<keyword id="KW-1185">Reference proteome</keyword>
<reference key="1">
    <citation type="journal article" date="2004" name="Nucleic Acids Res.">
        <title>Genome sequence of Symbiobacterium thermophilum, an uncultivable bacterium that depends on microbial commensalism.</title>
        <authorList>
            <person name="Ueda K."/>
            <person name="Yamashita A."/>
            <person name="Ishikawa J."/>
            <person name="Shimada M."/>
            <person name="Watsuji T."/>
            <person name="Morimura K."/>
            <person name="Ikeda H."/>
            <person name="Hattori M."/>
            <person name="Beppu T."/>
        </authorList>
    </citation>
    <scope>NUCLEOTIDE SEQUENCE [LARGE SCALE GENOMIC DNA]</scope>
    <source>
        <strain>DSM 24528 / JCM 14929 / IAM 14863 / T</strain>
    </source>
</reference>
<proteinExistence type="inferred from homology"/>
<sequence>MTQELSFEEAIQRLEQVVRELESGDLPLERGLELFQEGVALARHCTALLDRAEARIEQLLERDGGVETLPFEPE</sequence>
<comment type="function">
    <text evidence="1">Bidirectionally degrades single-stranded DNA into large acid-insoluble oligonucleotides, which are then degraded further into small acid-soluble oligonucleotides.</text>
</comment>
<comment type="catalytic activity">
    <reaction evidence="1">
        <text>Exonucleolytic cleavage in either 5'- to 3'- or 3'- to 5'-direction to yield nucleoside 5'-phosphates.</text>
        <dbReference type="EC" id="3.1.11.6"/>
    </reaction>
</comment>
<comment type="subunit">
    <text evidence="1">Heterooligomer composed of large and small subunits.</text>
</comment>
<comment type="subcellular location">
    <subcellularLocation>
        <location evidence="1">Cytoplasm</location>
    </subcellularLocation>
</comment>
<comment type="similarity">
    <text evidence="1">Belongs to the XseB family.</text>
</comment>
<protein>
    <recommendedName>
        <fullName evidence="1">Exodeoxyribonuclease 7 small subunit</fullName>
        <ecNumber evidence="1">3.1.11.6</ecNumber>
    </recommendedName>
    <alternativeName>
        <fullName evidence="1">Exodeoxyribonuclease VII small subunit</fullName>
        <shortName evidence="1">Exonuclease VII small subunit</shortName>
    </alternativeName>
</protein>
<organism>
    <name type="scientific">Symbiobacterium thermophilum (strain DSM 24528 / JCM 14929 / IAM 14863 / T)</name>
    <dbReference type="NCBI Taxonomy" id="292459"/>
    <lineage>
        <taxon>Bacteria</taxon>
        <taxon>Bacillati</taxon>
        <taxon>Bacillota</taxon>
        <taxon>Clostridia</taxon>
        <taxon>Eubacteriales</taxon>
        <taxon>Symbiobacteriaceae</taxon>
        <taxon>Symbiobacterium</taxon>
    </lineage>
</organism>